<protein>
    <recommendedName>
        <fullName>Inducible ornithine decarboxylase</fullName>
        <shortName>ODC</shortName>
        <ecNumber>4.1.1.17</ecNumber>
    </recommendedName>
</protein>
<gene>
    <name type="primary">odcI</name>
</gene>
<proteinExistence type="evidence at protein level"/>
<comment type="catalytic activity">
    <reaction>
        <text>L-ornithine + H(+) = putrescine + CO2</text>
        <dbReference type="Rhea" id="RHEA:22964"/>
        <dbReference type="ChEBI" id="CHEBI:15378"/>
        <dbReference type="ChEBI" id="CHEBI:16526"/>
        <dbReference type="ChEBI" id="CHEBI:46911"/>
        <dbReference type="ChEBI" id="CHEBI:326268"/>
        <dbReference type="EC" id="4.1.1.17"/>
    </reaction>
</comment>
<comment type="cofactor">
    <cofactor>
        <name>pyridoxal 5'-phosphate</name>
        <dbReference type="ChEBI" id="CHEBI:597326"/>
    </cofactor>
</comment>
<comment type="subunit">
    <text>Dodecamer.</text>
</comment>
<comment type="induction">
    <text>By ornithine.</text>
</comment>
<comment type="similarity">
    <text evidence="1">Belongs to the Orn/Lys/Arg decarboxylase class-I family.</text>
</comment>
<feature type="initiator methionine" description="Removed">
    <location>
        <position position="1"/>
    </location>
</feature>
<feature type="chain" id="PRO_0000201137" description="Inducible ornithine decarboxylase">
    <location>
        <begin position="2"/>
        <end position="731"/>
    </location>
</feature>
<feature type="modified residue" description="N6-(pyridoxal phosphate)lysine">
    <location>
        <position position="356"/>
    </location>
</feature>
<feature type="strand" evidence="2">
    <location>
        <begin position="6"/>
        <end position="9"/>
    </location>
</feature>
<feature type="helix" evidence="2">
    <location>
        <begin position="11"/>
        <end position="16"/>
    </location>
</feature>
<feature type="strand" evidence="2">
    <location>
        <begin position="27"/>
        <end position="29"/>
    </location>
</feature>
<feature type="strand" evidence="2">
    <location>
        <begin position="31"/>
        <end position="40"/>
    </location>
</feature>
<feature type="helix" evidence="2">
    <location>
        <begin position="44"/>
        <end position="51"/>
    </location>
</feature>
<feature type="strand" evidence="2">
    <location>
        <begin position="59"/>
        <end position="64"/>
    </location>
</feature>
<feature type="helix" evidence="3">
    <location>
        <begin position="66"/>
        <end position="68"/>
    </location>
</feature>
<feature type="helix" evidence="2">
    <location>
        <begin position="71"/>
        <end position="74"/>
    </location>
</feature>
<feature type="strand" evidence="2">
    <location>
        <begin position="79"/>
        <end position="82"/>
    </location>
</feature>
<feature type="helix" evidence="2">
    <location>
        <begin position="92"/>
        <end position="107"/>
    </location>
</feature>
<feature type="helix" evidence="2">
    <location>
        <begin position="110"/>
        <end position="119"/>
    </location>
</feature>
<feature type="strand" evidence="2">
    <location>
        <begin position="127"/>
        <end position="129"/>
    </location>
</feature>
<feature type="turn" evidence="2">
    <location>
        <begin position="130"/>
        <end position="136"/>
    </location>
</feature>
<feature type="helix" evidence="2">
    <location>
        <begin position="137"/>
        <end position="139"/>
    </location>
</feature>
<feature type="helix" evidence="2">
    <location>
        <begin position="141"/>
        <end position="150"/>
    </location>
</feature>
<feature type="helix" evidence="2">
    <location>
        <begin position="153"/>
        <end position="156"/>
    </location>
</feature>
<feature type="helix" evidence="2">
    <location>
        <begin position="164"/>
        <end position="166"/>
    </location>
</feature>
<feature type="turn" evidence="2">
    <location>
        <begin position="169"/>
        <end position="172"/>
    </location>
</feature>
<feature type="helix" evidence="2">
    <location>
        <begin position="175"/>
        <end position="186"/>
    </location>
</feature>
<feature type="strand" evidence="2">
    <location>
        <begin position="190"/>
        <end position="197"/>
    </location>
</feature>
<feature type="helix" evidence="2">
    <location>
        <begin position="198"/>
        <end position="210"/>
    </location>
</feature>
<feature type="strand" evidence="2">
    <location>
        <begin position="216"/>
        <end position="220"/>
    </location>
</feature>
<feature type="helix" evidence="2">
    <location>
        <begin position="225"/>
        <end position="231"/>
    </location>
</feature>
<feature type="turn" evidence="2">
    <location>
        <begin position="232"/>
        <end position="235"/>
    </location>
</feature>
<feature type="strand" evidence="2">
    <location>
        <begin position="238"/>
        <end position="242"/>
    </location>
</feature>
<feature type="strand" evidence="2">
    <location>
        <begin position="244"/>
        <end position="246"/>
    </location>
</feature>
<feature type="strand" evidence="2">
    <location>
        <begin position="252"/>
        <end position="255"/>
    </location>
</feature>
<feature type="helix" evidence="2">
    <location>
        <begin position="257"/>
        <end position="259"/>
    </location>
</feature>
<feature type="helix" evidence="2">
    <location>
        <begin position="262"/>
        <end position="268"/>
    </location>
</feature>
<feature type="turn" evidence="2">
    <location>
        <begin position="269"/>
        <end position="271"/>
    </location>
</feature>
<feature type="helix" evidence="2">
    <location>
        <begin position="274"/>
        <end position="277"/>
    </location>
</feature>
<feature type="strand" evidence="2">
    <location>
        <begin position="283"/>
        <end position="291"/>
    </location>
</feature>
<feature type="strand" evidence="2">
    <location>
        <begin position="295"/>
        <end position="298"/>
    </location>
</feature>
<feature type="helix" evidence="2">
    <location>
        <begin position="300"/>
        <end position="307"/>
    </location>
</feature>
<feature type="helix" evidence="2">
    <location>
        <begin position="308"/>
        <end position="310"/>
    </location>
</feature>
<feature type="strand" evidence="2">
    <location>
        <begin position="311"/>
        <end position="317"/>
    </location>
</feature>
<feature type="helix" evidence="2">
    <location>
        <begin position="323"/>
        <end position="325"/>
    </location>
</feature>
<feature type="helix" evidence="2">
    <location>
        <begin position="328"/>
        <end position="333"/>
    </location>
</feature>
<feature type="strand" evidence="2">
    <location>
        <begin position="347"/>
        <end position="352"/>
    </location>
</feature>
<feature type="helix" evidence="2">
    <location>
        <begin position="354"/>
        <end position="357"/>
    </location>
</feature>
<feature type="strand" evidence="2">
    <location>
        <begin position="365"/>
        <end position="370"/>
    </location>
</feature>
<feature type="helix" evidence="2">
    <location>
        <begin position="372"/>
        <end position="374"/>
    </location>
</feature>
<feature type="strand" evidence="3">
    <location>
        <begin position="375"/>
        <end position="379"/>
    </location>
</feature>
<feature type="helix" evidence="2">
    <location>
        <begin position="383"/>
        <end position="393"/>
    </location>
</feature>
<feature type="helix" evidence="2">
    <location>
        <begin position="400"/>
        <end position="413"/>
    </location>
</feature>
<feature type="helix" evidence="2">
    <location>
        <begin position="415"/>
        <end position="438"/>
    </location>
</feature>
<feature type="strand" evidence="2">
    <location>
        <begin position="442"/>
        <end position="447"/>
    </location>
</feature>
<feature type="strand" evidence="2">
    <location>
        <begin position="449"/>
        <end position="451"/>
    </location>
</feature>
<feature type="helix" evidence="2">
    <location>
        <begin position="456"/>
        <end position="458"/>
    </location>
</feature>
<feature type="helix" evidence="2">
    <location>
        <begin position="461"/>
        <end position="464"/>
    </location>
</feature>
<feature type="helix" evidence="2">
    <location>
        <begin position="468"/>
        <end position="471"/>
    </location>
</feature>
<feature type="turn" evidence="2">
    <location>
        <begin position="478"/>
        <end position="480"/>
    </location>
</feature>
<feature type="strand" evidence="2">
    <location>
        <begin position="490"/>
        <end position="492"/>
    </location>
</feature>
<feature type="strand" evidence="2">
    <location>
        <begin position="496"/>
        <end position="500"/>
    </location>
</feature>
<feature type="strand" evidence="2">
    <location>
        <begin position="502"/>
        <end position="505"/>
    </location>
</feature>
<feature type="turn" evidence="2">
    <location>
        <begin position="506"/>
        <end position="509"/>
    </location>
</feature>
<feature type="helix" evidence="2">
    <location>
        <begin position="518"/>
        <end position="527"/>
    </location>
</feature>
<feature type="strand" evidence="2">
    <location>
        <begin position="533"/>
        <end position="535"/>
    </location>
</feature>
<feature type="strand" evidence="2">
    <location>
        <begin position="537"/>
        <end position="543"/>
    </location>
</feature>
<feature type="helix" evidence="2">
    <location>
        <begin position="550"/>
        <end position="568"/>
    </location>
</feature>
<feature type="helix" evidence="2">
    <location>
        <begin position="573"/>
        <end position="576"/>
    </location>
</feature>
<feature type="helix" evidence="2">
    <location>
        <begin position="578"/>
        <end position="581"/>
    </location>
</feature>
<feature type="turn" evidence="2">
    <location>
        <begin position="585"/>
        <end position="587"/>
    </location>
</feature>
<feature type="helix" evidence="2">
    <location>
        <begin position="593"/>
        <end position="605"/>
    </location>
</feature>
<feature type="turn" evidence="2">
    <location>
        <begin position="606"/>
        <end position="608"/>
    </location>
</feature>
<feature type="helix" evidence="2">
    <location>
        <begin position="609"/>
        <end position="615"/>
    </location>
</feature>
<feature type="helix" evidence="2">
    <location>
        <begin position="619"/>
        <end position="621"/>
    </location>
</feature>
<feature type="strand" evidence="2">
    <location>
        <begin position="624"/>
        <end position="627"/>
    </location>
</feature>
<feature type="helix" evidence="2">
    <location>
        <begin position="629"/>
        <end position="637"/>
    </location>
</feature>
<feature type="strand" evidence="2">
    <location>
        <begin position="641"/>
        <end position="645"/>
    </location>
</feature>
<feature type="turn" evidence="2">
    <location>
        <begin position="646"/>
        <end position="648"/>
    </location>
</feature>
<feature type="strand" evidence="2">
    <location>
        <begin position="652"/>
        <end position="656"/>
    </location>
</feature>
<feature type="strand" evidence="2">
    <location>
        <begin position="658"/>
        <end position="660"/>
    </location>
</feature>
<feature type="turn" evidence="2">
    <location>
        <begin position="661"/>
        <end position="663"/>
    </location>
</feature>
<feature type="helix" evidence="2">
    <location>
        <begin position="676"/>
        <end position="691"/>
    </location>
</feature>
<feature type="strand" evidence="2">
    <location>
        <begin position="699"/>
        <end position="707"/>
    </location>
</feature>
<feature type="strand" evidence="2">
    <location>
        <begin position="710"/>
        <end position="718"/>
    </location>
</feature>
<feature type="helix" evidence="2">
    <location>
        <begin position="720"/>
        <end position="724"/>
    </location>
</feature>
<feature type="helix" evidence="2">
    <location>
        <begin position="727"/>
        <end position="729"/>
    </location>
</feature>
<dbReference type="EC" id="4.1.1.17"/>
<dbReference type="EMBL" id="U11816">
    <property type="protein sequence ID" value="AAA64830.1"/>
    <property type="molecule type" value="Genomic_DNA"/>
</dbReference>
<dbReference type="PIR" id="A55229">
    <property type="entry name" value="A55229"/>
</dbReference>
<dbReference type="PDB" id="1C4K">
    <property type="method" value="X-ray"/>
    <property type="resolution" value="2.70 A"/>
    <property type="chains" value="A=2-731"/>
</dbReference>
<dbReference type="PDB" id="1ORD">
    <property type="method" value="X-ray"/>
    <property type="resolution" value="3.00 A"/>
    <property type="chains" value="A/B=2-731"/>
</dbReference>
<dbReference type="PDBsum" id="1C4K"/>
<dbReference type="PDBsum" id="1ORD"/>
<dbReference type="SMR" id="P43099"/>
<dbReference type="DrugBank" id="DB04137">
    <property type="generic name" value="Guanosine-5'-Triphosphate"/>
</dbReference>
<dbReference type="BRENDA" id="4.1.1.17">
    <property type="organism ID" value="13668"/>
</dbReference>
<dbReference type="SABIO-RK" id="P43099"/>
<dbReference type="EvolutionaryTrace" id="P43099"/>
<dbReference type="GO" id="GO:0005829">
    <property type="term" value="C:cytosol"/>
    <property type="evidence" value="ECO:0007669"/>
    <property type="project" value="TreeGrafter"/>
</dbReference>
<dbReference type="GO" id="GO:0004586">
    <property type="term" value="F:ornithine decarboxylase activity"/>
    <property type="evidence" value="ECO:0007669"/>
    <property type="project" value="UniProtKB-EC"/>
</dbReference>
<dbReference type="GO" id="GO:0030170">
    <property type="term" value="F:pyridoxal phosphate binding"/>
    <property type="evidence" value="ECO:0007669"/>
    <property type="project" value="TreeGrafter"/>
</dbReference>
<dbReference type="GO" id="GO:0006520">
    <property type="term" value="P:amino acid metabolic process"/>
    <property type="evidence" value="ECO:0007669"/>
    <property type="project" value="InterPro"/>
</dbReference>
<dbReference type="CDD" id="cd00615">
    <property type="entry name" value="Orn_deC_like"/>
    <property type="match status" value="1"/>
</dbReference>
<dbReference type="FunFam" id="3.40.640.10:FF:000008">
    <property type="entry name" value="Lysine decarboxylase, inducible"/>
    <property type="match status" value="1"/>
</dbReference>
<dbReference type="FunFam" id="3.90.1150.10:FF:000032">
    <property type="entry name" value="Ornithine decarboxylase SpeF"/>
    <property type="match status" value="1"/>
</dbReference>
<dbReference type="Gene3D" id="3.40.50.220">
    <property type="match status" value="1"/>
</dbReference>
<dbReference type="Gene3D" id="3.90.1150.10">
    <property type="entry name" value="Aspartate Aminotransferase, domain 1"/>
    <property type="match status" value="1"/>
</dbReference>
<dbReference type="Gene3D" id="3.90.100.10">
    <property type="entry name" value="Orn/Lys/Arg decarboxylase, C-terminal domain"/>
    <property type="match status" value="1"/>
</dbReference>
<dbReference type="Gene3D" id="3.40.640.10">
    <property type="entry name" value="Type I PLP-dependent aspartate aminotransferase-like (Major domain)"/>
    <property type="match status" value="1"/>
</dbReference>
<dbReference type="InterPro" id="IPR011006">
    <property type="entry name" value="CheY-like_superfamily"/>
</dbReference>
<dbReference type="InterPro" id="IPR005308">
    <property type="entry name" value="OKR_de-COase_N"/>
</dbReference>
<dbReference type="InterPro" id="IPR011193">
    <property type="entry name" value="Orn/lys/arg_de-COase"/>
</dbReference>
<dbReference type="InterPro" id="IPR000310">
    <property type="entry name" value="Orn/Lys/Arg_deCO2ase_major_dom"/>
</dbReference>
<dbReference type="InterPro" id="IPR027464">
    <property type="entry name" value="Ornithine_deCO2ase_N"/>
</dbReference>
<dbReference type="InterPro" id="IPR008286">
    <property type="entry name" value="Prn/Lys/Arg_de-COase_C"/>
</dbReference>
<dbReference type="InterPro" id="IPR036633">
    <property type="entry name" value="Prn/Lys/Arg_de-COase_C_sf"/>
</dbReference>
<dbReference type="InterPro" id="IPR015424">
    <property type="entry name" value="PyrdxlP-dep_Trfase"/>
</dbReference>
<dbReference type="InterPro" id="IPR015421">
    <property type="entry name" value="PyrdxlP-dep_Trfase_major"/>
</dbReference>
<dbReference type="InterPro" id="IPR015422">
    <property type="entry name" value="PyrdxlP-dep_Trfase_small"/>
</dbReference>
<dbReference type="NCBIfam" id="NF010092">
    <property type="entry name" value="PRK13578.1"/>
    <property type="match status" value="1"/>
</dbReference>
<dbReference type="PANTHER" id="PTHR45229:SF3">
    <property type="entry name" value="BIODEGRADATIVE ARGININE DECARBOXYLASE"/>
    <property type="match status" value="1"/>
</dbReference>
<dbReference type="PANTHER" id="PTHR45229">
    <property type="entry name" value="CONSTITUTIVE ORNITHINE DECARBOXYLASE"/>
    <property type="match status" value="1"/>
</dbReference>
<dbReference type="Pfam" id="PF01276">
    <property type="entry name" value="OKR_DC_1"/>
    <property type="match status" value="1"/>
</dbReference>
<dbReference type="Pfam" id="PF03711">
    <property type="entry name" value="OKR_DC_1_C"/>
    <property type="match status" value="1"/>
</dbReference>
<dbReference type="Pfam" id="PF03709">
    <property type="entry name" value="OKR_DC_1_N"/>
    <property type="match status" value="1"/>
</dbReference>
<dbReference type="PIRSF" id="PIRSF009393">
    <property type="entry name" value="Orn_decarb"/>
    <property type="match status" value="1"/>
</dbReference>
<dbReference type="SUPFAM" id="SSF52172">
    <property type="entry name" value="CheY-like"/>
    <property type="match status" value="1"/>
</dbReference>
<dbReference type="SUPFAM" id="SSF55904">
    <property type="entry name" value="Ornithine decarboxylase C-terminal domain"/>
    <property type="match status" value="1"/>
</dbReference>
<dbReference type="SUPFAM" id="SSF53383">
    <property type="entry name" value="PLP-dependent transferases"/>
    <property type="match status" value="1"/>
</dbReference>
<dbReference type="PROSITE" id="PS00703">
    <property type="entry name" value="OKR_DC_1"/>
    <property type="match status" value="1"/>
</dbReference>
<evidence type="ECO:0000305" key="1"/>
<evidence type="ECO:0007829" key="2">
    <source>
        <dbReference type="PDB" id="1C4K"/>
    </source>
</evidence>
<evidence type="ECO:0007829" key="3">
    <source>
        <dbReference type="PDB" id="1ORD"/>
    </source>
</evidence>
<sequence length="731" mass="82688">MSSSLKIASTQEARQYFDTDRVVVDAVGSDFTDVGAVIAMDYETDVIDAADATKFGIPVFAVTKDAQAISADELKKIFHIIDLENKFDATVNAREIETAVNNYEDSILPPFFKSLKEYVSRGLIQFDCPGHQGGQYYRKHPAGREFYDFFGETVFRADLCNADVALGDLLIHEGPAVAAEKHAARVYNADKTYFVLGGSSNANNTVTSALVSNGDLVLFDRNNHKSVYNSALAMAGGRPVYLQTNRNPYGFIGGIYDSDFDEKKIRELAAKVDPERAKWKRPFRLAVIQLGTYDGTIYNAHEVVKRIGHLCDYIEFDSAWVGYEQFIPMMRNSSPLLIDDLGPEDPGIIVVQSVHKQQAGFSQTSQIHKKDSHIKGQLRYCDHKHFNNSFNLFMSTSPFYPMYAALDVNAAMQEGEAGRKLWHDLLITTIEARKKLIKAGSMFRPFVPPVVNGKKWEDGDTEDMANNIDYWRFEKGAKWHAYEGYGDNQYYVDPNKFMLTTPGINPETGDYEDFGVPATIVANYLRDHGIIPEKSDLNSILFLMTPAETPAKMNNLITQLLQLQRLIEEDAPLKQVLPSIYAANEERYNGYTIRELCQELHDFYKNNNTFTYQKRLFLREFFPEQGMLPYEARQEFIRNHNKLVPLNKIEGEIALEGALPYPPGVFCVAPGEKWSETAVKYFTILQDGINNFPGFAPEIQGVYFKQEGDKVVAYGEVYDAEVAKNDDRYNN</sequence>
<keyword id="KW-0002">3D-structure</keyword>
<keyword id="KW-0210">Decarboxylase</keyword>
<keyword id="KW-0903">Direct protein sequencing</keyword>
<keyword id="KW-0456">Lyase</keyword>
<keyword id="KW-0663">Pyridoxal phosphate</keyword>
<reference key="1">
    <citation type="journal article" date="1994" name="J. Bacteriol.">
        <title>Sequence of ornithine decarboxylase from Lactobacillus sp. strain 30a.</title>
        <authorList>
            <person name="Hackert M.L."/>
            <person name="Carroll D.W."/>
            <person name="Davidson L."/>
            <person name="Kim S.-O."/>
            <person name="Momany C."/>
            <person name="Vaaler G.L."/>
            <person name="Zhang L."/>
        </authorList>
    </citation>
    <scope>NUCLEOTIDE SEQUENCE [GENOMIC DNA]</scope>
    <scope>PARTIAL PROTEIN SEQUENCE</scope>
</reference>
<reference key="2">
    <citation type="journal article" date="1995" name="J. Mol. Biol.">
        <title>Crystallographic structure of a PLP-dependent ornithine decarboxylase from Lactobacillus 30a to 3.0-A resolution.</title>
        <authorList>
            <person name="Momany C."/>
            <person name="Ernst S."/>
            <person name="Gosh R."/>
            <person name="Chang N.-L."/>
            <person name="Hackert M.L."/>
        </authorList>
    </citation>
    <scope>X-RAY CRYSTALLOGRAPHY (3.0 ANGSTROMS)</scope>
</reference>
<reference key="3">
    <citation type="journal article" date="1999" name="Acta Crystallogr. D">
        <title>Three-dimensional structure of the Gly121Tyr dimeric form of ornithine decarboxylase from Lactobacillus 30a.</title>
        <authorList>
            <person name="Vitali J."/>
            <person name="Carroll D."/>
            <person name="Chaudhry R.G."/>
            <person name="Hackert M.L."/>
        </authorList>
    </citation>
    <scope>X-RAY CRYSTALLOGRAPHY (2.7 ANGSTROMS)</scope>
</reference>
<reference key="4">
    <citation type="journal article" date="1995" name="Protein Sci.">
        <title>Structural motifs for pyridoxal-5'-phosphate binding in decarboxylases: an analysis based on the crystal structure of the Lactobacillus 30a ornithine decarboxylase.</title>
        <authorList>
            <person name="Momany C."/>
            <person name="Gosh R."/>
            <person name="Hackert M.L."/>
        </authorList>
    </citation>
    <scope>DISCUSSION OF SEQUENCE</scope>
</reference>
<organism>
    <name type="scientific">Lactobacillus sp. (strain 30a)</name>
    <dbReference type="NCBI Taxonomy" id="1593"/>
    <lineage>
        <taxon>Bacteria</taxon>
        <taxon>Bacillati</taxon>
        <taxon>Bacillota</taxon>
        <taxon>Bacilli</taxon>
        <taxon>Lactobacillales</taxon>
        <taxon>Lactobacillaceae</taxon>
        <taxon>Lactobacillus</taxon>
    </lineage>
</organism>
<name>DCOR_LACS3</name>
<accession>P43099</accession>